<feature type="chain" id="PRO_0000318121" description="TATA box-binding protein-like 2">
    <location>
        <begin position="1"/>
        <end position="344"/>
    </location>
</feature>
<feature type="region of interest" description="Disordered" evidence="5">
    <location>
        <begin position="78"/>
        <end position="143"/>
    </location>
</feature>
<feature type="compositionally biased region" description="Low complexity" evidence="5">
    <location>
        <begin position="110"/>
        <end position="120"/>
    </location>
</feature>
<feature type="compositionally biased region" description="Polar residues" evidence="5">
    <location>
        <begin position="134"/>
        <end position="143"/>
    </location>
</feature>
<reference key="1">
    <citation type="journal article" date="2004" name="Nature">
        <title>Genome sequence of the Brown Norway rat yields insights into mammalian evolution.</title>
        <authorList>
            <person name="Gibbs R.A."/>
            <person name="Weinstock G.M."/>
            <person name="Metzker M.L."/>
            <person name="Muzny D.M."/>
            <person name="Sodergren E.J."/>
            <person name="Scherer S."/>
            <person name="Scott G."/>
            <person name="Steffen D."/>
            <person name="Worley K.C."/>
            <person name="Burch P.E."/>
            <person name="Okwuonu G."/>
            <person name="Hines S."/>
            <person name="Lewis L."/>
            <person name="Deramo C."/>
            <person name="Delgado O."/>
            <person name="Dugan-Rocha S."/>
            <person name="Miner G."/>
            <person name="Morgan M."/>
            <person name="Hawes A."/>
            <person name="Gill R."/>
            <person name="Holt R.A."/>
            <person name="Adams M.D."/>
            <person name="Amanatides P.G."/>
            <person name="Baden-Tillson H."/>
            <person name="Barnstead M."/>
            <person name="Chin S."/>
            <person name="Evans C.A."/>
            <person name="Ferriera S."/>
            <person name="Fosler C."/>
            <person name="Glodek A."/>
            <person name="Gu Z."/>
            <person name="Jennings D."/>
            <person name="Kraft C.L."/>
            <person name="Nguyen T."/>
            <person name="Pfannkoch C.M."/>
            <person name="Sitter C."/>
            <person name="Sutton G.G."/>
            <person name="Venter J.C."/>
            <person name="Woodage T."/>
            <person name="Smith D."/>
            <person name="Lee H.-M."/>
            <person name="Gustafson E."/>
            <person name="Cahill P."/>
            <person name="Kana A."/>
            <person name="Doucette-Stamm L."/>
            <person name="Weinstock K."/>
            <person name="Fechtel K."/>
            <person name="Weiss R.B."/>
            <person name="Dunn D.M."/>
            <person name="Green E.D."/>
            <person name="Blakesley R.W."/>
            <person name="Bouffard G.G."/>
            <person name="De Jong P.J."/>
            <person name="Osoegawa K."/>
            <person name="Zhu B."/>
            <person name="Marra M."/>
            <person name="Schein J."/>
            <person name="Bosdet I."/>
            <person name="Fjell C."/>
            <person name="Jones S."/>
            <person name="Krzywinski M."/>
            <person name="Mathewson C."/>
            <person name="Siddiqui A."/>
            <person name="Wye N."/>
            <person name="McPherson J."/>
            <person name="Zhao S."/>
            <person name="Fraser C.M."/>
            <person name="Shetty J."/>
            <person name="Shatsman S."/>
            <person name="Geer K."/>
            <person name="Chen Y."/>
            <person name="Abramzon S."/>
            <person name="Nierman W.C."/>
            <person name="Havlak P.H."/>
            <person name="Chen R."/>
            <person name="Durbin K.J."/>
            <person name="Egan A."/>
            <person name="Ren Y."/>
            <person name="Song X.-Z."/>
            <person name="Li B."/>
            <person name="Liu Y."/>
            <person name="Qin X."/>
            <person name="Cawley S."/>
            <person name="Cooney A.J."/>
            <person name="D'Souza L.M."/>
            <person name="Martin K."/>
            <person name="Wu J.Q."/>
            <person name="Gonzalez-Garay M.L."/>
            <person name="Jackson A.R."/>
            <person name="Kalafus K.J."/>
            <person name="McLeod M.P."/>
            <person name="Milosavljevic A."/>
            <person name="Virk D."/>
            <person name="Volkov A."/>
            <person name="Wheeler D.A."/>
            <person name="Zhang Z."/>
            <person name="Bailey J.A."/>
            <person name="Eichler E.E."/>
            <person name="Tuzun E."/>
            <person name="Birney E."/>
            <person name="Mongin E."/>
            <person name="Ureta-Vidal A."/>
            <person name="Woodwark C."/>
            <person name="Zdobnov E."/>
            <person name="Bork P."/>
            <person name="Suyama M."/>
            <person name="Torrents D."/>
            <person name="Alexandersson M."/>
            <person name="Trask B.J."/>
            <person name="Young J.M."/>
            <person name="Huang H."/>
            <person name="Wang H."/>
            <person name="Xing H."/>
            <person name="Daniels S."/>
            <person name="Gietzen D."/>
            <person name="Schmidt J."/>
            <person name="Stevens K."/>
            <person name="Vitt U."/>
            <person name="Wingrove J."/>
            <person name="Camara F."/>
            <person name="Mar Alba M."/>
            <person name="Abril J.F."/>
            <person name="Guigo R."/>
            <person name="Smit A."/>
            <person name="Dubchak I."/>
            <person name="Rubin E.M."/>
            <person name="Couronne O."/>
            <person name="Poliakov A."/>
            <person name="Huebner N."/>
            <person name="Ganten D."/>
            <person name="Goesele C."/>
            <person name="Hummel O."/>
            <person name="Kreitler T."/>
            <person name="Lee Y.-A."/>
            <person name="Monti J."/>
            <person name="Schulz H."/>
            <person name="Zimdahl H."/>
            <person name="Himmelbauer H."/>
            <person name="Lehrach H."/>
            <person name="Jacob H.J."/>
            <person name="Bromberg S."/>
            <person name="Gullings-Handley J."/>
            <person name="Jensen-Seaman M.I."/>
            <person name="Kwitek A.E."/>
            <person name="Lazar J."/>
            <person name="Pasko D."/>
            <person name="Tonellato P.J."/>
            <person name="Twigger S."/>
            <person name="Ponting C.P."/>
            <person name="Duarte J.M."/>
            <person name="Rice S."/>
            <person name="Goodstadt L."/>
            <person name="Beatson S.A."/>
            <person name="Emes R.D."/>
            <person name="Winter E.E."/>
            <person name="Webber C."/>
            <person name="Brandt P."/>
            <person name="Nyakatura G."/>
            <person name="Adetobi M."/>
            <person name="Chiaromonte F."/>
            <person name="Elnitski L."/>
            <person name="Eswara P."/>
            <person name="Hardison R.C."/>
            <person name="Hou M."/>
            <person name="Kolbe D."/>
            <person name="Makova K."/>
            <person name="Miller W."/>
            <person name="Nekrutenko A."/>
            <person name="Riemer C."/>
            <person name="Schwartz S."/>
            <person name="Taylor J."/>
            <person name="Yang S."/>
            <person name="Zhang Y."/>
            <person name="Lindpaintner K."/>
            <person name="Andrews T.D."/>
            <person name="Caccamo M."/>
            <person name="Clamp M."/>
            <person name="Clarke L."/>
            <person name="Curwen V."/>
            <person name="Durbin R.M."/>
            <person name="Eyras E."/>
            <person name="Searle S.M."/>
            <person name="Cooper G.M."/>
            <person name="Batzoglou S."/>
            <person name="Brudno M."/>
            <person name="Sidow A."/>
            <person name="Stone E.A."/>
            <person name="Payseur B.A."/>
            <person name="Bourque G."/>
            <person name="Lopez-Otin C."/>
            <person name="Puente X.S."/>
            <person name="Chakrabarti K."/>
            <person name="Chatterji S."/>
            <person name="Dewey C."/>
            <person name="Pachter L."/>
            <person name="Bray N."/>
            <person name="Yap V.B."/>
            <person name="Caspi A."/>
            <person name="Tesler G."/>
            <person name="Pevzner P.A."/>
            <person name="Haussler D."/>
            <person name="Roskin K.M."/>
            <person name="Baertsch R."/>
            <person name="Clawson H."/>
            <person name="Furey T.S."/>
            <person name="Hinrichs A.S."/>
            <person name="Karolchik D."/>
            <person name="Kent W.J."/>
            <person name="Rosenbloom K.R."/>
            <person name="Trumbower H."/>
            <person name="Weirauch M."/>
            <person name="Cooper D.N."/>
            <person name="Stenson P.D."/>
            <person name="Ma B."/>
            <person name="Brent M."/>
            <person name="Arumugam M."/>
            <person name="Shteynberg D."/>
            <person name="Copley R.R."/>
            <person name="Taylor M.S."/>
            <person name="Riethman H."/>
            <person name="Mudunuri U."/>
            <person name="Peterson J."/>
            <person name="Guyer M."/>
            <person name="Felsenfeld A."/>
            <person name="Old S."/>
            <person name="Mockrin S."/>
            <person name="Collins F.S."/>
        </authorList>
    </citation>
    <scope>NUCLEOTIDE SEQUENCE [LARGE SCALE GENOMIC DNA]</scope>
    <source>
        <strain>Brown Norway</strain>
    </source>
</reference>
<reference evidence="6 7" key="2">
    <citation type="journal article" date="2007" name="DNA Cell Biol.">
        <title>Genomics, evolution, and expression of TBPL2, a member of the TBP family.</title>
        <authorList>
            <person name="Di Pietro C."/>
            <person name="Ragusa M."/>
            <person name="Duro L."/>
            <person name="Guglielmino M.R."/>
            <person name="Barbagallo D."/>
            <person name="Carnemolla A."/>
            <person name="Lagana A."/>
            <person name="Buffa P."/>
            <person name="Angelica R."/>
            <person name="Rinaldi A."/>
            <person name="Calafato M.S."/>
            <person name="Milicia I."/>
            <person name="Caserta C."/>
            <person name="Giugno R."/>
            <person name="Pulvirenti A."/>
            <person name="Giunta V."/>
            <person name="Rapisarda A."/>
            <person name="Di Pietro V."/>
            <person name="Grillo A."/>
            <person name="Messina A."/>
            <person name="Ferro A."/>
            <person name="Grzeschik K.H."/>
            <person name="Purrello M."/>
        </authorList>
    </citation>
    <scope>IDENTIFICATION</scope>
</reference>
<comment type="function">
    <text evidence="2">Transcription factor required in complex with TAF3 for the differentiation of myoblasts into myocytes. The complex replaces TFIID at specific promoters at an early stage in the differentiation process (By similarity).</text>
</comment>
<comment type="subunit">
    <text evidence="2">Interacts with TAF3.</text>
</comment>
<comment type="subcellular location">
    <subcellularLocation>
        <location evidence="3">Cytoplasm</location>
    </subcellularLocation>
    <subcellularLocation>
        <location evidence="3">Nucleus</location>
    </subcellularLocation>
    <text evidence="3">Present in the cytoplasm during cytokinesis.</text>
</comment>
<comment type="similarity">
    <text evidence="4">Belongs to the TBP family.</text>
</comment>
<name>TBPL2_RAT</name>
<proteinExistence type="evidence at transcript level"/>
<protein>
    <recommendedName>
        <fullName>TATA box-binding protein-like 2</fullName>
        <shortName>TBP-like 2</shortName>
    </recommendedName>
    <alternativeName>
        <fullName>TATA box-binding protein-related factor 3</fullName>
        <shortName>TBP-related factor 3</shortName>
    </alternativeName>
</protein>
<organism>
    <name type="scientific">Rattus norvegicus</name>
    <name type="common">Rat</name>
    <dbReference type="NCBI Taxonomy" id="10116"/>
    <lineage>
        <taxon>Eukaryota</taxon>
        <taxon>Metazoa</taxon>
        <taxon>Chordata</taxon>
        <taxon>Craniata</taxon>
        <taxon>Vertebrata</taxon>
        <taxon>Euteleostomi</taxon>
        <taxon>Mammalia</taxon>
        <taxon>Eutheria</taxon>
        <taxon>Euarchontoglires</taxon>
        <taxon>Glires</taxon>
        <taxon>Rodentia</taxon>
        <taxon>Myomorpha</taxon>
        <taxon>Muroidea</taxon>
        <taxon>Muridae</taxon>
        <taxon>Murinae</taxon>
        <taxon>Rattus</taxon>
    </lineage>
</organism>
<dbReference type="EMBL" id="AAHX01020401">
    <property type="status" value="NOT_ANNOTATED_CDS"/>
    <property type="molecule type" value="Genomic_DNA"/>
</dbReference>
<dbReference type="EMBL" id="BK005774">
    <property type="protein sequence ID" value="DAA06034.1"/>
    <property type="molecule type" value="mRNA"/>
</dbReference>
<dbReference type="RefSeq" id="NP_001092831.1">
    <property type="nucleotide sequence ID" value="NM_001099361.2"/>
</dbReference>
<dbReference type="SMR" id="A6H909"/>
<dbReference type="FunCoup" id="A6H909">
    <property type="interactions" value="5"/>
</dbReference>
<dbReference type="STRING" id="10116.ENSRNOP00000039739"/>
<dbReference type="PhosphoSitePlus" id="A6H909"/>
<dbReference type="PaxDb" id="10116-ENSRNOP00000039739"/>
<dbReference type="GeneID" id="680050"/>
<dbReference type="KEGG" id="rno:680050"/>
<dbReference type="UCSC" id="RGD:1596837">
    <property type="organism name" value="rat"/>
</dbReference>
<dbReference type="AGR" id="RGD:1596837"/>
<dbReference type="CTD" id="387332"/>
<dbReference type="RGD" id="1596837">
    <property type="gene designation" value="Tbpl2"/>
</dbReference>
<dbReference type="VEuPathDB" id="HostDB:ENSRNOG00000033682"/>
<dbReference type="eggNOG" id="KOG3302">
    <property type="taxonomic scope" value="Eukaryota"/>
</dbReference>
<dbReference type="HOGENOM" id="CLU_060161_1_2_1"/>
<dbReference type="InParanoid" id="A6H909"/>
<dbReference type="OrthoDB" id="54174at9989"/>
<dbReference type="PhylomeDB" id="A6H909"/>
<dbReference type="PRO" id="PR:A6H909"/>
<dbReference type="Proteomes" id="UP000002494">
    <property type="component" value="Chromosome 3"/>
</dbReference>
<dbReference type="Bgee" id="ENSRNOG00000033682">
    <property type="expression patterns" value="Expressed in ovary"/>
</dbReference>
<dbReference type="GO" id="GO:0005737">
    <property type="term" value="C:cytoplasm"/>
    <property type="evidence" value="ECO:0000266"/>
    <property type="project" value="RGD"/>
</dbReference>
<dbReference type="GO" id="GO:0001674">
    <property type="term" value="C:female germ cell nucleus"/>
    <property type="evidence" value="ECO:0000266"/>
    <property type="project" value="RGD"/>
</dbReference>
<dbReference type="GO" id="GO:0005634">
    <property type="term" value="C:nucleus"/>
    <property type="evidence" value="ECO:0000266"/>
    <property type="project" value="RGD"/>
</dbReference>
<dbReference type="GO" id="GO:0003677">
    <property type="term" value="F:DNA binding"/>
    <property type="evidence" value="ECO:0000266"/>
    <property type="project" value="RGD"/>
</dbReference>
<dbReference type="GO" id="GO:0016251">
    <property type="term" value="F:RNA polymerase II general transcription initiation factor activity"/>
    <property type="evidence" value="ECO:0000318"/>
    <property type="project" value="GO_Central"/>
</dbReference>
<dbReference type="GO" id="GO:0006352">
    <property type="term" value="P:DNA-templated transcription initiation"/>
    <property type="evidence" value="ECO:0000318"/>
    <property type="project" value="GO_Central"/>
</dbReference>
<dbReference type="CDD" id="cd04516">
    <property type="entry name" value="TBP_eukaryotes"/>
    <property type="match status" value="1"/>
</dbReference>
<dbReference type="FunFam" id="3.30.310.10:FF:000001">
    <property type="entry name" value="TATA-box-binding protein 2"/>
    <property type="match status" value="1"/>
</dbReference>
<dbReference type="FunFam" id="3.30.310.10:FF:000002">
    <property type="entry name" value="TATA-box-binding protein 2"/>
    <property type="match status" value="1"/>
</dbReference>
<dbReference type="Gene3D" id="3.30.310.10">
    <property type="entry name" value="TATA-Binding Protein"/>
    <property type="match status" value="2"/>
</dbReference>
<dbReference type="HAMAP" id="MF_00408">
    <property type="entry name" value="TATA_bind_prot_arch"/>
    <property type="match status" value="1"/>
</dbReference>
<dbReference type="InterPro" id="IPR000814">
    <property type="entry name" value="TBP"/>
</dbReference>
<dbReference type="InterPro" id="IPR030491">
    <property type="entry name" value="TBP_CS"/>
</dbReference>
<dbReference type="InterPro" id="IPR012295">
    <property type="entry name" value="TBP_dom_sf"/>
</dbReference>
<dbReference type="InterPro" id="IPR033710">
    <property type="entry name" value="TBP_eukaryotic"/>
</dbReference>
<dbReference type="PANTHER" id="PTHR10126">
    <property type="entry name" value="TATA-BOX BINDING PROTEIN"/>
    <property type="match status" value="1"/>
</dbReference>
<dbReference type="Pfam" id="PF00352">
    <property type="entry name" value="TBP"/>
    <property type="match status" value="2"/>
</dbReference>
<dbReference type="PRINTS" id="PR00686">
    <property type="entry name" value="TIFACTORIID"/>
</dbReference>
<dbReference type="SUPFAM" id="SSF55945">
    <property type="entry name" value="TATA-box binding protein-like"/>
    <property type="match status" value="2"/>
</dbReference>
<dbReference type="PROSITE" id="PS00351">
    <property type="entry name" value="TFIID"/>
    <property type="match status" value="2"/>
</dbReference>
<gene>
    <name evidence="1" type="primary">Tbpl2</name>
    <name type="synonym">Tbp2</name>
    <name evidence="1" type="synonym">Trf3</name>
</gene>
<accession>A6H909</accession>
<keyword id="KW-0963">Cytoplasm</keyword>
<keyword id="KW-0217">Developmental protein</keyword>
<keyword id="KW-0238">DNA-binding</keyword>
<keyword id="KW-0539">Nucleus</keyword>
<keyword id="KW-1185">Reference proteome</keyword>
<keyword id="KW-0804">Transcription</keyword>
<keyword id="KW-0805">Transcription regulation</keyword>
<evidence type="ECO:0000250" key="1">
    <source>
        <dbReference type="UniProtKB" id="P62380"/>
    </source>
</evidence>
<evidence type="ECO:0000250" key="2">
    <source>
        <dbReference type="UniProtKB" id="Q6SJ95"/>
    </source>
</evidence>
<evidence type="ECO:0000250" key="3">
    <source>
        <dbReference type="UniProtKB" id="Q6SJ96"/>
    </source>
</evidence>
<evidence type="ECO:0000255" key="4"/>
<evidence type="ECO:0000256" key="5">
    <source>
        <dbReference type="SAM" id="MobiDB-lite"/>
    </source>
</evidence>
<evidence type="ECO:0000305" key="6"/>
<evidence type="ECO:0000312" key="7">
    <source>
        <dbReference type="EMBL" id="DAA06034.1"/>
    </source>
</evidence>
<sequence length="344" mass="38355">MEEDMYVDIFLDPYTFQDDFPPATSQLFSPGAPLDVHPLNPSNPETVFHSHLGAVKKAPSDFSSVDLSFLPDELTQENKDRTVTGNKVTNEESFRTQDWQSQLQLPDEQGSGLNLNSNSSPDTQSCLCSHDADSNQLSSETPNSNALPVVLISSMTPMNPVTECSGIVPQLQNVVSTANLACKLDLRKIALNAKNTEYNPKRFAAVIMRIREPRTTALIFSSGKVVCTGAKSEDESRLAARKYARVVQKLGFPVRFFNFKIQNMVASCDVKFPIRLEILALTHRQFSSYEPELFPGLIYKMVKPQVVLLIFASGKVVLTGAKERSEIYEAFENMYPILESFKKV</sequence>